<keyword id="KW-0002">3D-structure</keyword>
<keyword id="KW-0004">4Fe-4S</keyword>
<keyword id="KW-0408">Iron</keyword>
<keyword id="KW-0411">Iron-sulfur</keyword>
<keyword id="KW-0456">Lyase</keyword>
<keyword id="KW-0479">Metal-binding</keyword>
<keyword id="KW-1185">Reference proteome</keyword>
<sequence length="420" mass="46063">MTLVEKILSKKVGYEVCAGDSIEVEVDLAMTHDGTTPLAYKALKEMSDSVWNPDKIVVAFDHNVPPNTVKAAEMQKLALEFVKRFGIKNFHKGGEGICHQILAENYVLPNMFVAGGDSHTCTHGAFGAFATGFGATDMAYIYATGETWIKVPKTIRVDIVGKNENVSAKDIVLRVCKEIGRRGATYMAIEYGGEVVKNMDMDGRLTLCNMAIEMGGKTGVIEADEITYDYLKKERGLSDEDIAKLKKERITVNRDEANYYKEIEIDITDMEEQVAVPHHPDNVKPISDVEGTEINQVFIGSCTNGRLSDLREAAKYLKGREVHKDVKLIVIPASKKVFLQALKEGIIDIFVKAGAMICTPGCGPCLGAHQGVLAEGEICLSTTNRNFKGRMGHINSYIYLASPKIAAISAVKGYITNKLD</sequence>
<protein>
    <recommendedName>
        <fullName>Methanogen homoaconitase large subunit</fullName>
        <shortName>HACN</shortName>
        <ecNumber evidence="3">4.2.1.114</ecNumber>
    </recommendedName>
    <alternativeName>
        <fullName>Homoaconitate hydratase</fullName>
    </alternativeName>
</protein>
<comment type="function">
    <text evidence="3 4">Component of a hydro-lyase with broad substrate specificity for cis-unsaturated tricarboxylic acids. Catalyzes both the reversible dehydration of (R)-homocitrate ((R)-2-hydroxybutane-1,2,4-tricarboxylate) to produce cis-homoaconitate ((Z)-but-1-ene-1,2,4-tricarboxylate), and its hydration to homoisocitrate ((1R,2S)-1-hydroxybutane-1,2,4-tricarboxylate). Is also able to hydrate the analogous longer chain substrates cis-homo(2)-aconitate, cis-homo(3)-aconitate, and even the non-physiological cis-homo(4)-aconitate with similar efficiency. These reactions are part of the biosynthesis pathway of coenzyme B. Can also catalyze the hydration of maleate to (R)-malate, and that of cis-aconitate. Cannot catalyze the hydration of citraconate and the dehydration of (S)-homocitrate, citramalate, 2-isopropylmalate, 3-isopropylmalate, citrate or threo-DL-isocitrate.</text>
</comment>
<comment type="catalytic activity">
    <reaction evidence="3">
        <text>(2R)-homocitrate = (2R,3S)-homoisocitrate</text>
        <dbReference type="Rhea" id="RHEA:32303"/>
        <dbReference type="ChEBI" id="CHEBI:15404"/>
        <dbReference type="ChEBI" id="CHEBI:58884"/>
        <dbReference type="EC" id="4.2.1.114"/>
    </reaction>
    <physiologicalReaction direction="left-to-right" evidence="5">
        <dbReference type="Rhea" id="RHEA:32304"/>
    </physiologicalReaction>
</comment>
<comment type="catalytic activity">
    <reaction evidence="3">
        <text>(2R)-homocitrate = cis-homoaconitate + H2O</text>
        <dbReference type="Rhea" id="RHEA:26101"/>
        <dbReference type="ChEBI" id="CHEBI:15377"/>
        <dbReference type="ChEBI" id="CHEBI:58174"/>
        <dbReference type="ChEBI" id="CHEBI:58884"/>
    </reaction>
    <physiologicalReaction direction="left-to-right" evidence="5">
        <dbReference type="Rhea" id="RHEA:26102"/>
    </physiologicalReaction>
</comment>
<comment type="catalytic activity">
    <reaction evidence="3">
        <text>(2R,3S)-homoisocitrate = cis-homoaconitate + H2O</text>
        <dbReference type="Rhea" id="RHEA:15485"/>
        <dbReference type="ChEBI" id="CHEBI:15377"/>
        <dbReference type="ChEBI" id="CHEBI:15404"/>
        <dbReference type="ChEBI" id="CHEBI:58174"/>
    </reaction>
    <physiologicalReaction direction="right-to-left" evidence="5">
        <dbReference type="Rhea" id="RHEA:15487"/>
    </physiologicalReaction>
</comment>
<comment type="catalytic activity">
    <reaction evidence="3">
        <text>cis-(homo)2aconitate + H2O = (2R,3S)-iso(homo)2citrate</text>
        <dbReference type="Rhea" id="RHEA:68416"/>
        <dbReference type="ChEBI" id="CHEBI:15377"/>
        <dbReference type="ChEBI" id="CHEBI:72710"/>
        <dbReference type="ChEBI" id="CHEBI:72722"/>
        <dbReference type="EC" id="4.2.1.114"/>
    </reaction>
    <physiologicalReaction direction="left-to-right" evidence="5">
        <dbReference type="Rhea" id="RHEA:68417"/>
    </physiologicalReaction>
</comment>
<comment type="catalytic activity">
    <reaction evidence="3">
        <text>cis-(homo)3aconitate + H2O = (2R,3S)-iso(homo)3citrate</text>
        <dbReference type="Rhea" id="RHEA:68420"/>
        <dbReference type="ChEBI" id="CHEBI:15377"/>
        <dbReference type="ChEBI" id="CHEBI:72712"/>
        <dbReference type="ChEBI" id="CHEBI:177881"/>
        <dbReference type="EC" id="4.2.1.114"/>
    </reaction>
    <physiologicalReaction direction="left-to-right" evidence="5">
        <dbReference type="Rhea" id="RHEA:68421"/>
    </physiologicalReaction>
</comment>
<comment type="catalytic activity">
    <reaction evidence="3">
        <text>(R)-malate = maleate + H2O</text>
        <dbReference type="Rhea" id="RHEA:23692"/>
        <dbReference type="ChEBI" id="CHEBI:15377"/>
        <dbReference type="ChEBI" id="CHEBI:15588"/>
        <dbReference type="ChEBI" id="CHEBI:30780"/>
    </reaction>
</comment>
<comment type="catalytic activity">
    <reaction evidence="4">
        <text>cis-aconitate + H2O = D-threo-isocitrate</text>
        <dbReference type="Rhea" id="RHEA:22144"/>
        <dbReference type="ChEBI" id="CHEBI:15377"/>
        <dbReference type="ChEBI" id="CHEBI:15562"/>
        <dbReference type="ChEBI" id="CHEBI:16383"/>
    </reaction>
</comment>
<comment type="cofactor">
    <cofactor evidence="1 3">
        <name>[4Fe-4S] cluster</name>
        <dbReference type="ChEBI" id="CHEBI:49883"/>
    </cofactor>
    <text evidence="1 3">Binds 1 [4Fe-4S] cluster per subunit.</text>
</comment>
<comment type="biophysicochemical properties">
    <kinetics>
        <KM evidence="3">22 uM for cis-homoaconitate (at 60 degrees Celsius)</KM>
        <KM evidence="3">30 uM for cis-homo(2)-aconitate (at 60 degrees Celsius)</KM>
        <KM evidence="3">36 uM for cis-homo(3)-aconitate (at 60 degrees Celsius)</KM>
        <KM evidence="3">175 uM for cis-homo(4)-aconitate (at 60 degrees Celsius)</KM>
        <KM evidence="3">330 uM for maleate (at 60 degrees Celsius)</KM>
        <KM evidence="3">1500 uM for (R)-homocitrate (at 60 degrees Celsius)</KM>
        <KM evidence="4">300 uM for cis-aconitate</KM>
        <Vmax evidence="3">0.68 umol/min/mg enzyme for cis-homoaconitate hydration reaction (at 60 degrees Celsius)</Vmax>
        <Vmax evidence="3">0.6 umol/min/mg enzyme for cis-homo(2)aconitate hydration reaction (at 60 degrees Celsius)</Vmax>
        <Vmax evidence="3">2.2 umol/min/mg enzyme for cis-homo(3)aconitate hydration reaction (at 60 degrees Celsius)</Vmax>
        <Vmax evidence="3">5.1 umol/min/mg enzyme for cis-homo(4)aconitate hydration reaction (at 60 degrees Celsius)</Vmax>
        <Vmax evidence="3">5.5 umol/min/mg enzyme for maleate hydration reaction (at 60 degrees Celsius)</Vmax>
        <Vmax evidence="3">0.59 umol/min/mg enzyme for (R)-homocitrate dehydration reaction (at 60 degrees Celsius)</Vmax>
        <text evidence="4">kcat is 0.75 sec(-1) for cis-aconitate hydration reaction (PubMed:20170198). Kinetic parameters measured using the HacAB complex.</text>
    </kinetics>
    <phDependence>
        <text evidence="3">Optimum pH is 9. Active from pH 8 to 10.</text>
    </phDependence>
</comment>
<comment type="pathway">
    <text evidence="5">Organic acid metabolism; 2-oxosuberate biosynthesis.</text>
</comment>
<comment type="subunit">
    <text evidence="2">Heterotetramer of 2 HacA and 2 HacB proteins.</text>
</comment>
<comment type="miscellaneous">
    <text>The heterotetramer that can be formed in vitro between HacA and LeuD cannot catalyze citraconate hydration or the dehydration of 2-isopropylmalate or 3-isopropylmalate.</text>
</comment>
<comment type="similarity">
    <text evidence="1">Belongs to the aconitase/IPM isomerase family. LeuC type 2 subfamily.</text>
</comment>
<accession>Q58409</accession>
<evidence type="ECO:0000255" key="1">
    <source>
        <dbReference type="HAMAP-Rule" id="MF_01027"/>
    </source>
</evidence>
<evidence type="ECO:0000269" key="2">
    <source>
    </source>
</evidence>
<evidence type="ECO:0000269" key="3">
    <source>
    </source>
</evidence>
<evidence type="ECO:0000269" key="4">
    <source>
    </source>
</evidence>
<evidence type="ECO:0000305" key="5">
    <source>
    </source>
</evidence>
<evidence type="ECO:0007829" key="6">
    <source>
        <dbReference type="PDB" id="4KP2"/>
    </source>
</evidence>
<proteinExistence type="evidence at protein level"/>
<dbReference type="EC" id="4.2.1.114" evidence="3"/>
<dbReference type="EMBL" id="L77117">
    <property type="protein sequence ID" value="AAB99007.1"/>
    <property type="molecule type" value="Genomic_DNA"/>
</dbReference>
<dbReference type="PIR" id="B64425">
    <property type="entry name" value="B64425"/>
</dbReference>
<dbReference type="RefSeq" id="WP_010870516.1">
    <property type="nucleotide sequence ID" value="NC_000909.1"/>
</dbReference>
<dbReference type="PDB" id="4KP2">
    <property type="method" value="X-ray"/>
    <property type="resolution" value="2.50 A"/>
    <property type="chains" value="A/B=1-420"/>
</dbReference>
<dbReference type="PDBsum" id="4KP2"/>
<dbReference type="SMR" id="Q58409"/>
<dbReference type="FunCoup" id="Q58409">
    <property type="interactions" value="291"/>
</dbReference>
<dbReference type="STRING" id="243232.MJ_1003"/>
<dbReference type="PaxDb" id="243232-MJ_1003"/>
<dbReference type="EnsemblBacteria" id="AAB99007">
    <property type="protein sequence ID" value="AAB99007"/>
    <property type="gene ID" value="MJ_1003"/>
</dbReference>
<dbReference type="GeneID" id="1451900"/>
<dbReference type="KEGG" id="mja:MJ_1003"/>
<dbReference type="eggNOG" id="arCOG01698">
    <property type="taxonomic scope" value="Archaea"/>
</dbReference>
<dbReference type="HOGENOM" id="CLU_006714_3_4_2"/>
<dbReference type="InParanoid" id="Q58409"/>
<dbReference type="OrthoDB" id="255at2157"/>
<dbReference type="PhylomeDB" id="Q58409"/>
<dbReference type="BioCyc" id="MetaCyc:MONOMER-2003"/>
<dbReference type="BRENDA" id="4.2.1.114">
    <property type="organism ID" value="3260"/>
</dbReference>
<dbReference type="SABIO-RK" id="Q58409"/>
<dbReference type="UniPathway" id="UPA00919"/>
<dbReference type="EvolutionaryTrace" id="Q58409"/>
<dbReference type="Proteomes" id="UP000000805">
    <property type="component" value="Chromosome"/>
</dbReference>
<dbReference type="GO" id="GO:0003861">
    <property type="term" value="F:3-isopropylmalate dehydratase activity"/>
    <property type="evidence" value="ECO:0007669"/>
    <property type="project" value="UniProtKB-UniRule"/>
</dbReference>
<dbReference type="GO" id="GO:0051539">
    <property type="term" value="F:4 iron, 4 sulfur cluster binding"/>
    <property type="evidence" value="ECO:0007669"/>
    <property type="project" value="UniProtKB-KW"/>
</dbReference>
<dbReference type="GO" id="GO:0004409">
    <property type="term" value="F:homoaconitate hydratase activity"/>
    <property type="evidence" value="ECO:0007669"/>
    <property type="project" value="RHEA"/>
</dbReference>
<dbReference type="GO" id="GO:0050075">
    <property type="term" value="F:maleate hydratase activity"/>
    <property type="evidence" value="ECO:0007669"/>
    <property type="project" value="RHEA"/>
</dbReference>
<dbReference type="GO" id="GO:0046872">
    <property type="term" value="F:metal ion binding"/>
    <property type="evidence" value="ECO:0007669"/>
    <property type="project" value="UniProtKB-KW"/>
</dbReference>
<dbReference type="GO" id="GO:0009098">
    <property type="term" value="P:L-leucine biosynthetic process"/>
    <property type="evidence" value="ECO:0007669"/>
    <property type="project" value="UniProtKB-UniRule"/>
</dbReference>
<dbReference type="CDD" id="cd01583">
    <property type="entry name" value="IPMI"/>
    <property type="match status" value="1"/>
</dbReference>
<dbReference type="Gene3D" id="3.30.499.10">
    <property type="entry name" value="Aconitase, domain 3"/>
    <property type="match status" value="2"/>
</dbReference>
<dbReference type="HAMAP" id="MF_01027">
    <property type="entry name" value="LeuC_type2"/>
    <property type="match status" value="1"/>
</dbReference>
<dbReference type="InterPro" id="IPR015931">
    <property type="entry name" value="Acnase/IPM_dHydase_lsu_aba_1/3"/>
</dbReference>
<dbReference type="InterPro" id="IPR001030">
    <property type="entry name" value="Acoase/IPM_deHydtase_lsu_aba"/>
</dbReference>
<dbReference type="InterPro" id="IPR018136">
    <property type="entry name" value="Aconitase_4Fe-4S_BS"/>
</dbReference>
<dbReference type="InterPro" id="IPR036008">
    <property type="entry name" value="Aconitase_4Fe-4S_dom"/>
</dbReference>
<dbReference type="InterPro" id="IPR011826">
    <property type="entry name" value="HAcnase/IPMdehydase_lsu_prok"/>
</dbReference>
<dbReference type="InterPro" id="IPR006251">
    <property type="entry name" value="Homoacnase/IPMdehydase_lsu"/>
</dbReference>
<dbReference type="InterPro" id="IPR050067">
    <property type="entry name" value="IPM_dehydratase_rel_enz"/>
</dbReference>
<dbReference type="InterPro" id="IPR033941">
    <property type="entry name" value="IPMI_cat"/>
</dbReference>
<dbReference type="NCBIfam" id="TIGR01343">
    <property type="entry name" value="hacA_fam"/>
    <property type="match status" value="1"/>
</dbReference>
<dbReference type="NCBIfam" id="NF040615">
    <property type="entry name" value="HacA_Meth"/>
    <property type="match status" value="1"/>
</dbReference>
<dbReference type="NCBIfam" id="TIGR02086">
    <property type="entry name" value="IPMI_arch"/>
    <property type="match status" value="1"/>
</dbReference>
<dbReference type="NCBIfam" id="NF001614">
    <property type="entry name" value="PRK00402.1"/>
    <property type="match status" value="1"/>
</dbReference>
<dbReference type="PANTHER" id="PTHR43822:SF2">
    <property type="entry name" value="HOMOACONITASE, MITOCHONDRIAL"/>
    <property type="match status" value="1"/>
</dbReference>
<dbReference type="PANTHER" id="PTHR43822">
    <property type="entry name" value="HOMOACONITASE, MITOCHONDRIAL-RELATED"/>
    <property type="match status" value="1"/>
</dbReference>
<dbReference type="Pfam" id="PF00330">
    <property type="entry name" value="Aconitase"/>
    <property type="match status" value="2"/>
</dbReference>
<dbReference type="PRINTS" id="PR00415">
    <property type="entry name" value="ACONITASE"/>
</dbReference>
<dbReference type="SUPFAM" id="SSF53732">
    <property type="entry name" value="Aconitase iron-sulfur domain"/>
    <property type="match status" value="1"/>
</dbReference>
<dbReference type="PROSITE" id="PS00450">
    <property type="entry name" value="ACONITASE_1"/>
    <property type="match status" value="1"/>
</dbReference>
<dbReference type="PROSITE" id="PS01244">
    <property type="entry name" value="ACONITASE_2"/>
    <property type="match status" value="1"/>
</dbReference>
<organism>
    <name type="scientific">Methanocaldococcus jannaschii (strain ATCC 43067 / DSM 2661 / JAL-1 / JCM 10045 / NBRC 100440)</name>
    <name type="common">Methanococcus jannaschii</name>
    <dbReference type="NCBI Taxonomy" id="243232"/>
    <lineage>
        <taxon>Archaea</taxon>
        <taxon>Methanobacteriati</taxon>
        <taxon>Methanobacteriota</taxon>
        <taxon>Methanomada group</taxon>
        <taxon>Methanococci</taxon>
        <taxon>Methanococcales</taxon>
        <taxon>Methanocaldococcaceae</taxon>
        <taxon>Methanocaldococcus</taxon>
    </lineage>
</organism>
<name>HACA_METJA</name>
<reference key="1">
    <citation type="journal article" date="1996" name="Science">
        <title>Complete genome sequence of the methanogenic archaeon, Methanococcus jannaschii.</title>
        <authorList>
            <person name="Bult C.J."/>
            <person name="White O."/>
            <person name="Olsen G.J."/>
            <person name="Zhou L."/>
            <person name="Fleischmann R.D."/>
            <person name="Sutton G.G."/>
            <person name="Blake J.A."/>
            <person name="FitzGerald L.M."/>
            <person name="Clayton R.A."/>
            <person name="Gocayne J.D."/>
            <person name="Kerlavage A.R."/>
            <person name="Dougherty B.A."/>
            <person name="Tomb J.-F."/>
            <person name="Adams M.D."/>
            <person name="Reich C.I."/>
            <person name="Overbeek R."/>
            <person name="Kirkness E.F."/>
            <person name="Weinstock K.G."/>
            <person name="Merrick J.M."/>
            <person name="Glodek A."/>
            <person name="Scott J.L."/>
            <person name="Geoghagen N.S.M."/>
            <person name="Weidman J.F."/>
            <person name="Fuhrmann J.L."/>
            <person name="Nguyen D."/>
            <person name="Utterback T.R."/>
            <person name="Kelley J.M."/>
            <person name="Peterson J.D."/>
            <person name="Sadow P.W."/>
            <person name="Hanna M.C."/>
            <person name="Cotton M.D."/>
            <person name="Roberts K.M."/>
            <person name="Hurst M.A."/>
            <person name="Kaine B.P."/>
            <person name="Borodovsky M."/>
            <person name="Klenk H.-P."/>
            <person name="Fraser C.M."/>
            <person name="Smith H.O."/>
            <person name="Woese C.R."/>
            <person name="Venter J.C."/>
        </authorList>
    </citation>
    <scope>NUCLEOTIDE SEQUENCE [LARGE SCALE GENOMIC DNA]</scope>
    <source>
        <strain>ATCC 43067 / DSM 2661 / JAL-1 / JCM 10045 / NBRC 100440</strain>
    </source>
</reference>
<reference key="2">
    <citation type="journal article" date="2007" name="J. Bacteriol.">
        <title>Enzymology and evolution of the pyruvate pathway to 2-oxobutyrate in Methanocaldococcus jannaschii.</title>
        <authorList>
            <person name="Drevland R.M."/>
            <person name="Waheed A."/>
            <person name="Graham D.E."/>
        </authorList>
    </citation>
    <scope>PUTATIVE FUNCTION AS A HOMOACONITASE</scope>
    <scope>LACK OF FUNCTION AS A ISOPROPYLMALATE ISOMERASE</scope>
    <scope>SUBUNIT</scope>
    <source>
        <strain>ATCC 43067 / DSM 2661 / JAL-1 / JCM 10045 / NBRC 100440</strain>
    </source>
</reference>
<reference key="3">
    <citation type="journal article" date="2008" name="J. Biol. Chem.">
        <title>Methanogen homoaconitase catalyzes both hydrolyase reactions in coenzyme B biosynthesis.</title>
        <authorList>
            <person name="Drevland R.M."/>
            <person name="Jia Y."/>
            <person name="Palmer D.R.J."/>
            <person name="Graham D.E."/>
        </authorList>
    </citation>
    <scope>FUNCTION</scope>
    <scope>CATALYTIC ACTIVITY</scope>
    <scope>COFACTOR</scope>
    <scope>SUBSTRATE SPECIFICITY</scope>
    <scope>BIOPHYSICOCHEMICAL PROPERTIES</scope>
</reference>
<reference key="4">
    <citation type="journal article" date="2010" name="Biochemistry">
        <title>Substrate specificity determinants of the methanogen homoaconitase enzyme: structure and function of the small subunit.</title>
        <authorList>
            <person name="Jeyakanthan J."/>
            <person name="Drevland R.M."/>
            <person name="Gayathri D.R."/>
            <person name="Velmurugan D."/>
            <person name="Shinkai A."/>
            <person name="Kuramitsu S."/>
            <person name="Yokoyama S."/>
            <person name="Graham D.E."/>
        </authorList>
    </citation>
    <scope>FUNCTION</scope>
    <scope>CATALYTIC ACTIVITY</scope>
    <scope>SUBSTRATE SPECIFICITY</scope>
    <scope>KINETIC PARAMETERS</scope>
</reference>
<feature type="chain" id="PRO_0000076868" description="Methanogen homoaconitase large subunit">
    <location>
        <begin position="1"/>
        <end position="420"/>
    </location>
</feature>
<feature type="binding site" evidence="1">
    <location>
        <position position="302"/>
    </location>
    <ligand>
        <name>[4Fe-4S] cluster</name>
        <dbReference type="ChEBI" id="CHEBI:49883"/>
    </ligand>
</feature>
<feature type="binding site" evidence="1">
    <location>
        <position position="362"/>
    </location>
    <ligand>
        <name>[4Fe-4S] cluster</name>
        <dbReference type="ChEBI" id="CHEBI:49883"/>
    </ligand>
</feature>
<feature type="binding site" evidence="1">
    <location>
        <position position="365"/>
    </location>
    <ligand>
        <name>[4Fe-4S] cluster</name>
        <dbReference type="ChEBI" id="CHEBI:49883"/>
    </ligand>
</feature>
<feature type="helix" evidence="6">
    <location>
        <begin position="3"/>
        <end position="12"/>
    </location>
</feature>
<feature type="strand" evidence="6">
    <location>
        <begin position="21"/>
        <end position="25"/>
    </location>
</feature>
<feature type="strand" evidence="6">
    <location>
        <begin position="27"/>
        <end position="32"/>
    </location>
</feature>
<feature type="turn" evidence="6">
    <location>
        <begin position="33"/>
        <end position="35"/>
    </location>
</feature>
<feature type="helix" evidence="6">
    <location>
        <begin position="36"/>
        <end position="46"/>
    </location>
</feature>
<feature type="helix" evidence="6">
    <location>
        <begin position="53"/>
        <end position="55"/>
    </location>
</feature>
<feature type="strand" evidence="6">
    <location>
        <begin position="56"/>
        <end position="59"/>
    </location>
</feature>
<feature type="helix" evidence="6">
    <location>
        <begin position="69"/>
        <end position="85"/>
    </location>
</feature>
<feature type="strand" evidence="6">
    <location>
        <begin position="88"/>
        <end position="91"/>
    </location>
</feature>
<feature type="helix" evidence="6">
    <location>
        <begin position="98"/>
        <end position="105"/>
    </location>
</feature>
<feature type="strand" evidence="6">
    <location>
        <begin position="112"/>
        <end position="117"/>
    </location>
</feature>
<feature type="helix" evidence="6">
    <location>
        <begin position="120"/>
        <end position="126"/>
    </location>
</feature>
<feature type="strand" evidence="6">
    <location>
        <begin position="129"/>
        <end position="132"/>
    </location>
</feature>
<feature type="helix" evidence="6">
    <location>
        <begin position="135"/>
        <end position="144"/>
    </location>
</feature>
<feature type="strand" evidence="6">
    <location>
        <begin position="145"/>
        <end position="150"/>
    </location>
</feature>
<feature type="strand" evidence="6">
    <location>
        <begin position="153"/>
        <end position="159"/>
    </location>
</feature>
<feature type="strand" evidence="6">
    <location>
        <begin position="164"/>
        <end position="166"/>
    </location>
</feature>
<feature type="helix" evidence="6">
    <location>
        <begin position="168"/>
        <end position="179"/>
    </location>
</feature>
<feature type="strand" evidence="6">
    <location>
        <begin position="187"/>
        <end position="193"/>
    </location>
</feature>
<feature type="helix" evidence="6">
    <location>
        <begin position="194"/>
        <end position="198"/>
    </location>
</feature>
<feature type="helix" evidence="6">
    <location>
        <begin position="201"/>
        <end position="209"/>
    </location>
</feature>
<feature type="helix" evidence="6">
    <location>
        <begin position="210"/>
        <end position="214"/>
    </location>
</feature>
<feature type="strand" evidence="6">
    <location>
        <begin position="216"/>
        <end position="221"/>
    </location>
</feature>
<feature type="helix" evidence="6">
    <location>
        <begin position="225"/>
        <end position="233"/>
    </location>
</feature>
<feature type="helix" evidence="6">
    <location>
        <begin position="239"/>
        <end position="246"/>
    </location>
</feature>
<feature type="strand" evidence="6">
    <location>
        <begin position="262"/>
        <end position="265"/>
    </location>
</feature>
<feature type="strand" evidence="6">
    <location>
        <begin position="273"/>
        <end position="275"/>
    </location>
</feature>
<feature type="strand" evidence="6">
    <location>
        <begin position="283"/>
        <end position="285"/>
    </location>
</feature>
<feature type="helix" evidence="6">
    <location>
        <begin position="286"/>
        <end position="289"/>
    </location>
</feature>
<feature type="strand" evidence="6">
    <location>
        <begin position="295"/>
        <end position="299"/>
    </location>
</feature>
<feature type="strand" evidence="6">
    <location>
        <begin position="301"/>
        <end position="304"/>
    </location>
</feature>
<feature type="helix" evidence="6">
    <location>
        <begin position="307"/>
        <end position="317"/>
    </location>
</feature>
<feature type="strand" evidence="6">
    <location>
        <begin position="327"/>
        <end position="330"/>
    </location>
</feature>
<feature type="helix" evidence="6">
    <location>
        <begin position="335"/>
        <end position="342"/>
    </location>
</feature>
<feature type="turn" evidence="6">
    <location>
        <begin position="343"/>
        <end position="345"/>
    </location>
</feature>
<feature type="helix" evidence="6">
    <location>
        <begin position="346"/>
        <end position="353"/>
    </location>
</feature>
<feature type="strand" evidence="6">
    <location>
        <begin position="364"/>
        <end position="367"/>
    </location>
</feature>
<feature type="strand" evidence="6">
    <location>
        <begin position="369"/>
        <end position="371"/>
    </location>
</feature>
<feature type="strand" evidence="6">
    <location>
        <begin position="378"/>
        <end position="384"/>
    </location>
</feature>
<feature type="strand" evidence="6">
    <location>
        <begin position="390"/>
        <end position="392"/>
    </location>
</feature>
<feature type="strand" evidence="6">
    <location>
        <begin position="397"/>
        <end position="400"/>
    </location>
</feature>
<feature type="helix" evidence="6">
    <location>
        <begin position="403"/>
        <end position="412"/>
    </location>
</feature>
<feature type="strand" evidence="6">
    <location>
        <begin position="413"/>
        <end position="415"/>
    </location>
</feature>
<gene>
    <name type="primary">hacA</name>
    <name type="ordered locus">MJ1003</name>
</gene>